<feature type="chain" id="PRO_0000169907" description="Galactose-1-phosphate uridylyltransferase">
    <location>
        <begin position="1"/>
        <end position="488"/>
    </location>
</feature>
<proteinExistence type="inferred from homology"/>
<dbReference type="EC" id="2.7.7.12"/>
<dbReference type="EMBL" id="X57248">
    <property type="protein sequence ID" value="CAA40526.1"/>
    <property type="molecule type" value="Genomic_DNA"/>
</dbReference>
<dbReference type="PIR" id="B47032">
    <property type="entry name" value="B47032"/>
</dbReference>
<dbReference type="RefSeq" id="WP_003627706.1">
    <property type="nucleotide sequence ID" value="NZ_WCHE01000033.1"/>
</dbReference>
<dbReference type="PATRIC" id="fig|1587.23.peg.1835"/>
<dbReference type="eggNOG" id="COG4468">
    <property type="taxonomic scope" value="Bacteria"/>
</dbReference>
<dbReference type="UniPathway" id="UPA00214"/>
<dbReference type="GO" id="GO:0005737">
    <property type="term" value="C:cytoplasm"/>
    <property type="evidence" value="ECO:0007669"/>
    <property type="project" value="UniProtKB-SubCell"/>
</dbReference>
<dbReference type="GO" id="GO:0008108">
    <property type="term" value="F:UDP-glucose:hexose-1-phosphate uridylyltransferase activity"/>
    <property type="evidence" value="ECO:0007669"/>
    <property type="project" value="UniProtKB-UniRule"/>
</dbReference>
<dbReference type="GO" id="GO:0006012">
    <property type="term" value="P:galactose metabolic process"/>
    <property type="evidence" value="ECO:0007669"/>
    <property type="project" value="UniProtKB-UniRule"/>
</dbReference>
<dbReference type="HAMAP" id="MF_00571">
    <property type="entry name" value="GalP_UDP_trans"/>
    <property type="match status" value="1"/>
</dbReference>
<dbReference type="InterPro" id="IPR000766">
    <property type="entry name" value="GalP_uridyl_Trfase_II"/>
</dbReference>
<dbReference type="InterPro" id="IPR023425">
    <property type="entry name" value="GalP_uridyl_Trfase_II_CS"/>
</dbReference>
<dbReference type="InterPro" id="IPR005850">
    <property type="entry name" value="GalP_Utransf_C"/>
</dbReference>
<dbReference type="InterPro" id="IPR005849">
    <property type="entry name" value="GalP_Utransf_N"/>
</dbReference>
<dbReference type="NCBIfam" id="NF003630">
    <property type="entry name" value="PRK05270.1-3"/>
    <property type="match status" value="1"/>
</dbReference>
<dbReference type="PANTHER" id="PTHR39191:SF1">
    <property type="entry name" value="DUF4922 DOMAIN-CONTAINING PROTEIN"/>
    <property type="match status" value="1"/>
</dbReference>
<dbReference type="PANTHER" id="PTHR39191">
    <property type="entry name" value="GALACTOSE-1-PHOSPHATE URIDYLYLTRANSFERASE"/>
    <property type="match status" value="1"/>
</dbReference>
<dbReference type="Pfam" id="PF02744">
    <property type="entry name" value="GalP_UDP_tr_C"/>
    <property type="match status" value="1"/>
</dbReference>
<dbReference type="Pfam" id="PF01087">
    <property type="entry name" value="GalP_UDP_transf"/>
    <property type="match status" value="1"/>
</dbReference>
<dbReference type="PIRSF" id="PIRSF006005">
    <property type="entry name" value="GalT_BS"/>
    <property type="match status" value="1"/>
</dbReference>
<dbReference type="PROSITE" id="PS01163">
    <property type="entry name" value="GAL_P_UDP_TRANSF_II"/>
    <property type="match status" value="1"/>
</dbReference>
<evidence type="ECO:0000305" key="1"/>
<sequence>MKIIEKFADEVINSGAYEPLDRVYVINKIRALVGDHDEEEENDQPAAKQLVDLAVKNEKIPDDITSREVLNDQLYDLATPTPSKTNSIFWQKMQKSSEENTDWFYKLCEDNNYVKKEAIAKNVVFSGTSSKGHSLEITINLSKPEKDPKAIAAAAHATGKKYPQCALCLENEGYLGGYGKNARSNLRIIRMNIAGRPWGFQYSPYAYFNEHCIFLDQKHIPMVINQQTLINLVEIEKIFPHYFVGSNADLPIVGGSMLAHEHYQGGRHTFPMMKAGIKKNIMFDSYPKVVAGIVDWPMSDLRLTSDNSLDLIDLGSKIIKFWDNYSDTARDIKAYEGETRHHTVTPIMHREGKNFVLDLVLRDNNTSEKYPLGIFHPHKQLWHIKKENIGLIEVMGRAILPGRLKSELEEVKKYWLGEDNKMAASHKEWADQVKAENEISLDNVDQVMEQSLVEVFEQVLQDAGVFKNNADGEEGWDKFITALTKEIK</sequence>
<comment type="catalytic activity">
    <reaction>
        <text>alpha-D-galactose 1-phosphate + UDP-alpha-D-glucose = alpha-D-glucose 1-phosphate + UDP-alpha-D-galactose</text>
        <dbReference type="Rhea" id="RHEA:13989"/>
        <dbReference type="ChEBI" id="CHEBI:58336"/>
        <dbReference type="ChEBI" id="CHEBI:58601"/>
        <dbReference type="ChEBI" id="CHEBI:58885"/>
        <dbReference type="ChEBI" id="CHEBI:66914"/>
        <dbReference type="EC" id="2.7.7.12"/>
    </reaction>
</comment>
<comment type="pathway">
    <text>Carbohydrate metabolism; galactose metabolism.</text>
</comment>
<comment type="subcellular location">
    <subcellularLocation>
        <location evidence="1">Cytoplasm</location>
    </subcellularLocation>
</comment>
<comment type="similarity">
    <text evidence="1">Belongs to the galactose-1-phosphate uridylyltransferase type 2 family.</text>
</comment>
<organism>
    <name type="scientific">Lactobacillus helveticus</name>
    <name type="common">Lactobacillus suntoryeus</name>
    <dbReference type="NCBI Taxonomy" id="1587"/>
    <lineage>
        <taxon>Bacteria</taxon>
        <taxon>Bacillati</taxon>
        <taxon>Bacillota</taxon>
        <taxon>Bacilli</taxon>
        <taxon>Lactobacillales</taxon>
        <taxon>Lactobacillaceae</taxon>
        <taxon>Lactobacillus</taxon>
    </lineage>
</organism>
<accession>Q00054</accession>
<name>GALT_LACHE</name>
<keyword id="KW-0119">Carbohydrate metabolism</keyword>
<keyword id="KW-0963">Cytoplasm</keyword>
<keyword id="KW-0299">Galactose metabolism</keyword>
<keyword id="KW-0548">Nucleotidyltransferase</keyword>
<keyword id="KW-0808">Transferase</keyword>
<gene>
    <name type="primary">galT</name>
</gene>
<protein>
    <recommendedName>
        <fullName>Galactose-1-phosphate uridylyltransferase</fullName>
        <shortName>Gal-1-P uridylyltransferase</shortName>
        <ecNumber>2.7.7.12</ecNumber>
    </recommendedName>
    <alternativeName>
        <fullName>UDP-glucose--hexose-1-phosphate uridylyltransferase</fullName>
    </alternativeName>
</protein>
<reference key="1">
    <citation type="journal article" date="1991" name="J. Bacteriol.">
        <title>Galactose utilization in Lactobacillus helveticus: isolation and characterization of the galactokinase (galK) and galactose-1-phosphate uridyl transferase (galT) genes.</title>
        <authorList>
            <person name="Mollet B."/>
            <person name="Pilloud N."/>
        </authorList>
    </citation>
    <scope>NUCLEOTIDE SEQUENCE [GENOMIC DNA]</scope>
    <source>
        <strain>ATCC 15009 / DSM 20075 / BCRC 12936 / JCM 1120 / NBRC 15019 / NCIMB 11971 / NRRL B-4526 / Lh12</strain>
    </source>
</reference>